<sequence length="74" mass="8294">MTNVYSLDGILVFGLLFVCTCAYFKKVPRLKTWLLSEKKGVWGVFYKAAVIGTRLHAAVAIACVVMAFYVLFIK</sequence>
<organism>
    <name type="scientific">Homo sapiens</name>
    <name type="common">Human</name>
    <dbReference type="NCBI Taxonomy" id="9606"/>
    <lineage>
        <taxon>Eukaryota</taxon>
        <taxon>Metazoa</taxon>
        <taxon>Chordata</taxon>
        <taxon>Craniata</taxon>
        <taxon>Vertebrata</taxon>
        <taxon>Euteleostomi</taxon>
        <taxon>Mammalia</taxon>
        <taxon>Eutheria</taxon>
        <taxon>Euarchontoglires</taxon>
        <taxon>Primates</taxon>
        <taxon>Haplorrhini</taxon>
        <taxon>Catarrhini</taxon>
        <taxon>Hominidae</taxon>
        <taxon>Homo</taxon>
    </lineage>
</organism>
<keyword id="KW-0333">Golgi apparatus</keyword>
<keyword id="KW-0472">Membrane</keyword>
<keyword id="KW-1267">Proteomics identification</keyword>
<keyword id="KW-1185">Reference proteome</keyword>
<keyword id="KW-0732">Signal</keyword>
<keyword id="KW-0812">Transmembrane</keyword>
<keyword id="KW-1133">Transmembrane helix</keyword>
<accession>Q9NRX6</accession>
<accession>B2RUU9</accession>
<reference key="1">
    <citation type="journal article" date="2000" name="Proc. Natl. Acad. Sci. U.S.A.">
        <title>Gene expression profiling in the human hypothalamus-pituitary-adrenal axis and full-length cDNA cloning.</title>
        <authorList>
            <person name="Hu R.-M."/>
            <person name="Han Z.-G."/>
            <person name="Song H.-D."/>
            <person name="Peng Y.-D."/>
            <person name="Huang Q.-H."/>
            <person name="Ren S.-X."/>
            <person name="Gu Y.-J."/>
            <person name="Huang C.-H."/>
            <person name="Li Y.-B."/>
            <person name="Jiang C.-L."/>
            <person name="Fu G."/>
            <person name="Zhang Q.-H."/>
            <person name="Gu B.-W."/>
            <person name="Dai M."/>
            <person name="Mao Y.-F."/>
            <person name="Gao G.-F."/>
            <person name="Rong R."/>
            <person name="Ye M."/>
            <person name="Zhou J."/>
            <person name="Xu S.-H."/>
            <person name="Gu J."/>
            <person name="Shi J.-X."/>
            <person name="Jin W.-R."/>
            <person name="Zhang C.-K."/>
            <person name="Wu T.-M."/>
            <person name="Huang G.-Y."/>
            <person name="Chen Z."/>
            <person name="Chen M.-D."/>
            <person name="Chen J.-L."/>
        </authorList>
    </citation>
    <scope>NUCLEOTIDE SEQUENCE [LARGE SCALE MRNA]</scope>
    <source>
        <tissue>Adrenal gland</tissue>
    </source>
</reference>
<reference key="2">
    <citation type="journal article" date="2004" name="Nat. Genet.">
        <title>Complete sequencing and characterization of 21,243 full-length human cDNAs.</title>
        <authorList>
            <person name="Ota T."/>
            <person name="Suzuki Y."/>
            <person name="Nishikawa T."/>
            <person name="Otsuki T."/>
            <person name="Sugiyama T."/>
            <person name="Irie R."/>
            <person name="Wakamatsu A."/>
            <person name="Hayashi K."/>
            <person name="Sato H."/>
            <person name="Nagai K."/>
            <person name="Kimura K."/>
            <person name="Makita H."/>
            <person name="Sekine M."/>
            <person name="Obayashi M."/>
            <person name="Nishi T."/>
            <person name="Shibahara T."/>
            <person name="Tanaka T."/>
            <person name="Ishii S."/>
            <person name="Yamamoto J."/>
            <person name="Saito K."/>
            <person name="Kawai Y."/>
            <person name="Isono Y."/>
            <person name="Nakamura Y."/>
            <person name="Nagahari K."/>
            <person name="Murakami K."/>
            <person name="Yasuda T."/>
            <person name="Iwayanagi T."/>
            <person name="Wagatsuma M."/>
            <person name="Shiratori A."/>
            <person name="Sudo H."/>
            <person name="Hosoiri T."/>
            <person name="Kaku Y."/>
            <person name="Kodaira H."/>
            <person name="Kondo H."/>
            <person name="Sugawara M."/>
            <person name="Takahashi M."/>
            <person name="Kanda K."/>
            <person name="Yokoi T."/>
            <person name="Furuya T."/>
            <person name="Kikkawa E."/>
            <person name="Omura Y."/>
            <person name="Abe K."/>
            <person name="Kamihara K."/>
            <person name="Katsuta N."/>
            <person name="Sato K."/>
            <person name="Tanikawa M."/>
            <person name="Yamazaki M."/>
            <person name="Ninomiya K."/>
            <person name="Ishibashi T."/>
            <person name="Yamashita H."/>
            <person name="Murakawa K."/>
            <person name="Fujimori K."/>
            <person name="Tanai H."/>
            <person name="Kimata M."/>
            <person name="Watanabe M."/>
            <person name="Hiraoka S."/>
            <person name="Chiba Y."/>
            <person name="Ishida S."/>
            <person name="Ono Y."/>
            <person name="Takiguchi S."/>
            <person name="Watanabe S."/>
            <person name="Yosida M."/>
            <person name="Hotuta T."/>
            <person name="Kusano J."/>
            <person name="Kanehori K."/>
            <person name="Takahashi-Fujii A."/>
            <person name="Hara H."/>
            <person name="Tanase T.-O."/>
            <person name="Nomura Y."/>
            <person name="Togiya S."/>
            <person name="Komai F."/>
            <person name="Hara R."/>
            <person name="Takeuchi K."/>
            <person name="Arita M."/>
            <person name="Imose N."/>
            <person name="Musashino K."/>
            <person name="Yuuki H."/>
            <person name="Oshima A."/>
            <person name="Sasaki N."/>
            <person name="Aotsuka S."/>
            <person name="Yoshikawa Y."/>
            <person name="Matsunawa H."/>
            <person name="Ichihara T."/>
            <person name="Shiohata N."/>
            <person name="Sano S."/>
            <person name="Moriya S."/>
            <person name="Momiyama H."/>
            <person name="Satoh N."/>
            <person name="Takami S."/>
            <person name="Terashima Y."/>
            <person name="Suzuki O."/>
            <person name="Nakagawa S."/>
            <person name="Senoh A."/>
            <person name="Mizoguchi H."/>
            <person name="Goto Y."/>
            <person name="Shimizu F."/>
            <person name="Wakebe H."/>
            <person name="Hishigaki H."/>
            <person name="Watanabe T."/>
            <person name="Sugiyama A."/>
            <person name="Takemoto M."/>
            <person name="Kawakami B."/>
            <person name="Yamazaki M."/>
            <person name="Watanabe K."/>
            <person name="Kumagai A."/>
            <person name="Itakura S."/>
            <person name="Fukuzumi Y."/>
            <person name="Fujimori Y."/>
            <person name="Komiyama M."/>
            <person name="Tashiro H."/>
            <person name="Tanigami A."/>
            <person name="Fujiwara T."/>
            <person name="Ono T."/>
            <person name="Yamada K."/>
            <person name="Fujii Y."/>
            <person name="Ozaki K."/>
            <person name="Hirao M."/>
            <person name="Ohmori Y."/>
            <person name="Kawabata A."/>
            <person name="Hikiji T."/>
            <person name="Kobatake N."/>
            <person name="Inagaki H."/>
            <person name="Ikema Y."/>
            <person name="Okamoto S."/>
            <person name="Okitani R."/>
            <person name="Kawakami T."/>
            <person name="Noguchi S."/>
            <person name="Itoh T."/>
            <person name="Shigeta K."/>
            <person name="Senba T."/>
            <person name="Matsumura K."/>
            <person name="Nakajima Y."/>
            <person name="Mizuno T."/>
            <person name="Morinaga M."/>
            <person name="Sasaki M."/>
            <person name="Togashi T."/>
            <person name="Oyama M."/>
            <person name="Hata H."/>
            <person name="Watanabe M."/>
            <person name="Komatsu T."/>
            <person name="Mizushima-Sugano J."/>
            <person name="Satoh T."/>
            <person name="Shirai Y."/>
            <person name="Takahashi Y."/>
            <person name="Nakagawa K."/>
            <person name="Okumura K."/>
            <person name="Nagase T."/>
            <person name="Nomura N."/>
            <person name="Kikuchi H."/>
            <person name="Masuho Y."/>
            <person name="Yamashita R."/>
            <person name="Nakai K."/>
            <person name="Yada T."/>
            <person name="Nakamura Y."/>
            <person name="Ohara O."/>
            <person name="Isogai T."/>
            <person name="Sugano S."/>
        </authorList>
    </citation>
    <scope>NUCLEOTIDE SEQUENCE [LARGE SCALE MRNA]</scope>
    <source>
        <tissue>Tongue</tissue>
    </source>
</reference>
<reference key="3">
    <citation type="journal article" date="2006" name="Nature">
        <title>The DNA sequence and biological annotation of human chromosome 1.</title>
        <authorList>
            <person name="Gregory S.G."/>
            <person name="Barlow K.F."/>
            <person name="McLay K.E."/>
            <person name="Kaul R."/>
            <person name="Swarbreck D."/>
            <person name="Dunham A."/>
            <person name="Scott C.E."/>
            <person name="Howe K.L."/>
            <person name="Woodfine K."/>
            <person name="Spencer C.C.A."/>
            <person name="Jones M.C."/>
            <person name="Gillson C."/>
            <person name="Searle S."/>
            <person name="Zhou Y."/>
            <person name="Kokocinski F."/>
            <person name="McDonald L."/>
            <person name="Evans R."/>
            <person name="Phillips K."/>
            <person name="Atkinson A."/>
            <person name="Cooper R."/>
            <person name="Jones C."/>
            <person name="Hall R.E."/>
            <person name="Andrews T.D."/>
            <person name="Lloyd C."/>
            <person name="Ainscough R."/>
            <person name="Almeida J.P."/>
            <person name="Ambrose K.D."/>
            <person name="Anderson F."/>
            <person name="Andrew R.W."/>
            <person name="Ashwell R.I.S."/>
            <person name="Aubin K."/>
            <person name="Babbage A.K."/>
            <person name="Bagguley C.L."/>
            <person name="Bailey J."/>
            <person name="Beasley H."/>
            <person name="Bethel G."/>
            <person name="Bird C.P."/>
            <person name="Bray-Allen S."/>
            <person name="Brown J.Y."/>
            <person name="Brown A.J."/>
            <person name="Buckley D."/>
            <person name="Burton J."/>
            <person name="Bye J."/>
            <person name="Carder C."/>
            <person name="Chapman J.C."/>
            <person name="Clark S.Y."/>
            <person name="Clarke G."/>
            <person name="Clee C."/>
            <person name="Cobley V."/>
            <person name="Collier R.E."/>
            <person name="Corby N."/>
            <person name="Coville G.J."/>
            <person name="Davies J."/>
            <person name="Deadman R."/>
            <person name="Dunn M."/>
            <person name="Earthrowl M."/>
            <person name="Ellington A.G."/>
            <person name="Errington H."/>
            <person name="Frankish A."/>
            <person name="Frankland J."/>
            <person name="French L."/>
            <person name="Garner P."/>
            <person name="Garnett J."/>
            <person name="Gay L."/>
            <person name="Ghori M.R.J."/>
            <person name="Gibson R."/>
            <person name="Gilby L.M."/>
            <person name="Gillett W."/>
            <person name="Glithero R.J."/>
            <person name="Grafham D.V."/>
            <person name="Griffiths C."/>
            <person name="Griffiths-Jones S."/>
            <person name="Grocock R."/>
            <person name="Hammond S."/>
            <person name="Harrison E.S.I."/>
            <person name="Hart E."/>
            <person name="Haugen E."/>
            <person name="Heath P.D."/>
            <person name="Holmes S."/>
            <person name="Holt K."/>
            <person name="Howden P.J."/>
            <person name="Hunt A.R."/>
            <person name="Hunt S.E."/>
            <person name="Hunter G."/>
            <person name="Isherwood J."/>
            <person name="James R."/>
            <person name="Johnson C."/>
            <person name="Johnson D."/>
            <person name="Joy A."/>
            <person name="Kay M."/>
            <person name="Kershaw J.K."/>
            <person name="Kibukawa M."/>
            <person name="Kimberley A.M."/>
            <person name="King A."/>
            <person name="Knights A.J."/>
            <person name="Lad H."/>
            <person name="Laird G."/>
            <person name="Lawlor S."/>
            <person name="Leongamornlert D.A."/>
            <person name="Lloyd D.M."/>
            <person name="Loveland J."/>
            <person name="Lovell J."/>
            <person name="Lush M.J."/>
            <person name="Lyne R."/>
            <person name="Martin S."/>
            <person name="Mashreghi-Mohammadi M."/>
            <person name="Matthews L."/>
            <person name="Matthews N.S.W."/>
            <person name="McLaren S."/>
            <person name="Milne S."/>
            <person name="Mistry S."/>
            <person name="Moore M.J.F."/>
            <person name="Nickerson T."/>
            <person name="O'Dell C.N."/>
            <person name="Oliver K."/>
            <person name="Palmeiri A."/>
            <person name="Palmer S.A."/>
            <person name="Parker A."/>
            <person name="Patel D."/>
            <person name="Pearce A.V."/>
            <person name="Peck A.I."/>
            <person name="Pelan S."/>
            <person name="Phelps K."/>
            <person name="Phillimore B.J."/>
            <person name="Plumb R."/>
            <person name="Rajan J."/>
            <person name="Raymond C."/>
            <person name="Rouse G."/>
            <person name="Saenphimmachak C."/>
            <person name="Sehra H.K."/>
            <person name="Sheridan E."/>
            <person name="Shownkeen R."/>
            <person name="Sims S."/>
            <person name="Skuce C.D."/>
            <person name="Smith M."/>
            <person name="Steward C."/>
            <person name="Subramanian S."/>
            <person name="Sycamore N."/>
            <person name="Tracey A."/>
            <person name="Tromans A."/>
            <person name="Van Helmond Z."/>
            <person name="Wall M."/>
            <person name="Wallis J.M."/>
            <person name="White S."/>
            <person name="Whitehead S.L."/>
            <person name="Wilkinson J.E."/>
            <person name="Willey D.L."/>
            <person name="Williams H."/>
            <person name="Wilming L."/>
            <person name="Wray P.W."/>
            <person name="Wu Z."/>
            <person name="Coulson A."/>
            <person name="Vaudin M."/>
            <person name="Sulston J.E."/>
            <person name="Durbin R.M."/>
            <person name="Hubbard T."/>
            <person name="Wooster R."/>
            <person name="Dunham I."/>
            <person name="Carter N.P."/>
            <person name="McVean G."/>
            <person name="Ross M.T."/>
            <person name="Harrow J."/>
            <person name="Olson M.V."/>
            <person name="Beck S."/>
            <person name="Rogers J."/>
            <person name="Bentley D.R."/>
        </authorList>
    </citation>
    <scope>NUCLEOTIDE SEQUENCE [LARGE SCALE GENOMIC DNA]</scope>
</reference>
<reference key="4">
    <citation type="submission" date="2005-07" db="EMBL/GenBank/DDBJ databases">
        <authorList>
            <person name="Mural R.J."/>
            <person name="Istrail S."/>
            <person name="Sutton G."/>
            <person name="Florea L."/>
            <person name="Halpern A.L."/>
            <person name="Mobarry C.M."/>
            <person name="Lippert R."/>
            <person name="Walenz B."/>
            <person name="Shatkay H."/>
            <person name="Dew I."/>
            <person name="Miller J.R."/>
            <person name="Flanigan M.J."/>
            <person name="Edwards N.J."/>
            <person name="Bolanos R."/>
            <person name="Fasulo D."/>
            <person name="Halldorsson B.V."/>
            <person name="Hannenhalli S."/>
            <person name="Turner R."/>
            <person name="Yooseph S."/>
            <person name="Lu F."/>
            <person name="Nusskern D.R."/>
            <person name="Shue B.C."/>
            <person name="Zheng X.H."/>
            <person name="Zhong F."/>
            <person name="Delcher A.L."/>
            <person name="Huson D.H."/>
            <person name="Kravitz S.A."/>
            <person name="Mouchard L."/>
            <person name="Reinert K."/>
            <person name="Remington K.A."/>
            <person name="Clark A.G."/>
            <person name="Waterman M.S."/>
            <person name="Eichler E.E."/>
            <person name="Adams M.D."/>
            <person name="Hunkapiller M.W."/>
            <person name="Myers E.W."/>
            <person name="Venter J.C."/>
        </authorList>
    </citation>
    <scope>NUCLEOTIDE SEQUENCE [LARGE SCALE GENOMIC DNA]</scope>
</reference>
<reference key="5">
    <citation type="journal article" date="2004" name="Genome Res.">
        <title>The status, quality, and expansion of the NIH full-length cDNA project: the Mammalian Gene Collection (MGC).</title>
        <authorList>
            <consortium name="The MGC Project Team"/>
        </authorList>
    </citation>
    <scope>NUCLEOTIDE SEQUENCE [LARGE SCALE MRNA]</scope>
    <source>
        <tissue>Brain</tissue>
        <tissue>Skin</tissue>
        <tissue>Testis</tissue>
        <tissue>Uterus</tissue>
    </source>
</reference>
<reference key="6">
    <citation type="journal article" date="2010" name="EMBO J.">
        <title>A genome-wide RNA interference screen identifies two novel components of the metazoan secretory pathway.</title>
        <authorList>
            <person name="Wendler F."/>
            <person name="Gillingham A.K."/>
            <person name="Sinka R."/>
            <person name="Rosa-Ferreira C."/>
            <person name="Gordon D.E."/>
            <person name="Franch-Marro X."/>
            <person name="Peden A.A."/>
            <person name="Vincent J.P."/>
            <person name="Munro S."/>
        </authorList>
    </citation>
    <scope>FUNCTION</scope>
    <scope>SUBCELLULAR LOCATION</scope>
</reference>
<feature type="signal peptide" evidence="1">
    <location>
        <begin position="1"/>
        <end position="22"/>
    </location>
</feature>
<feature type="chain" id="PRO_0000265081" description="Protein kish-B">
    <location>
        <begin position="23"/>
        <end position="74"/>
    </location>
</feature>
<feature type="topological domain" description="Extracellular" evidence="1">
    <location>
        <begin position="23"/>
        <end position="52"/>
    </location>
</feature>
<feature type="transmembrane region" description="Helical" evidence="1">
    <location>
        <begin position="53"/>
        <end position="73"/>
    </location>
</feature>
<feature type="topological domain" description="Cytoplasmic" evidence="1">
    <location>
        <position position="74"/>
    </location>
</feature>
<name>KISHB_HUMAN</name>
<protein>
    <recommendedName>
        <fullName>Protein kish-B</fullName>
    </recommendedName>
    <alternativeName>
        <fullName>Transmembrane protein 167B</fullName>
    </alternativeName>
</protein>
<proteinExistence type="evidence at protein level"/>
<gene>
    <name type="primary">TMEM167B</name>
    <name type="synonym">C1orf119</name>
    <name type="ORF">AD-020</name>
</gene>
<comment type="function">
    <text evidence="2">Involved in the early part of the secretory pathway.</text>
</comment>
<comment type="interaction">
    <interactant intactId="EBI-17684533">
        <id>Q9NRX6</id>
    </interactant>
    <interactant intactId="EBI-13379418">
        <id>O00590</id>
        <label>ACKR2</label>
    </interactant>
    <organismsDiffer>false</organismsDiffer>
    <experiments>3</experiments>
</comment>
<comment type="interaction">
    <interactant intactId="EBI-17684533">
        <id>Q9NRX6</id>
    </interactant>
    <interactant intactId="EBI-2803601">
        <id>Q9NRZ7</id>
        <label>AGPAT3</label>
    </interactant>
    <organismsDiffer>false</organismsDiffer>
    <experiments>3</experiments>
</comment>
<comment type="interaction">
    <interactant intactId="EBI-17684533">
        <id>Q9NRX6</id>
    </interactant>
    <interactant intactId="EBI-11976321">
        <id>O95236-2</id>
        <label>APOL3</label>
    </interactant>
    <organismsDiffer>false</organismsDiffer>
    <experiments>3</experiments>
</comment>
<comment type="interaction">
    <interactant intactId="EBI-17684533">
        <id>Q9NRX6</id>
    </interactant>
    <interactant intactId="EBI-12820279">
        <id>Q96PS8</id>
        <label>AQP10</label>
    </interactant>
    <organismsDiffer>false</organismsDiffer>
    <experiments>3</experiments>
</comment>
<comment type="interaction">
    <interactant intactId="EBI-17684533">
        <id>Q9NRX6</id>
    </interactant>
    <interactant intactId="EBI-13059134">
        <id>Q13520</id>
        <label>AQP6</label>
    </interactant>
    <organismsDiffer>false</organismsDiffer>
    <experiments>3</experiments>
</comment>
<comment type="interaction">
    <interactant intactId="EBI-17684533">
        <id>Q9NRX6</id>
    </interactant>
    <interactant intactId="EBI-12092171">
        <id>Q12797-6</id>
        <label>ASPH</label>
    </interactant>
    <organismsDiffer>false</organismsDiffer>
    <experiments>3</experiments>
</comment>
<comment type="interaction">
    <interactant intactId="EBI-17684533">
        <id>Q9NRX6</id>
    </interactant>
    <interactant intactId="EBI-3915344">
        <id>Q08708</id>
        <label>CD300C</label>
    </interactant>
    <organismsDiffer>false</organismsDiffer>
    <experiments>3</experiments>
</comment>
<comment type="interaction">
    <interactant intactId="EBI-17684533">
        <id>Q9NRX6</id>
    </interactant>
    <interactant intactId="EBI-17263290">
        <id>Q08722-3</id>
        <label>CD47</label>
    </interactant>
    <organismsDiffer>false</organismsDiffer>
    <experiments>3</experiments>
</comment>
<comment type="interaction">
    <interactant intactId="EBI-17684533">
        <id>Q9NRX6</id>
    </interactant>
    <interactant intactId="EBI-12019274">
        <id>Q4LDR2</id>
        <label>CTXN3</label>
    </interactant>
    <organismsDiffer>false</organismsDiffer>
    <experiments>3</experiments>
</comment>
<comment type="interaction">
    <interactant intactId="EBI-17684533">
        <id>Q9NRX6</id>
    </interactant>
    <interactant intactId="EBI-3915253">
        <id>Q15125</id>
        <label>EBP</label>
    </interactant>
    <organismsDiffer>false</organismsDiffer>
    <experiments>3</experiments>
</comment>
<comment type="interaction">
    <interactant intactId="EBI-17684533">
        <id>Q9NRX6</id>
    </interactant>
    <interactant intactId="EBI-1052304">
        <id>Q8NBQ5</id>
        <label>HSD17B11</label>
    </interactant>
    <organismsDiffer>false</organismsDiffer>
    <experiments>3</experiments>
</comment>
<comment type="interaction">
    <interactant intactId="EBI-17684533">
        <id>Q9NRX6</id>
    </interactant>
    <interactant intactId="EBI-18053395">
        <id>Q7Z5P4</id>
        <label>HSD17B13</label>
    </interactant>
    <organismsDiffer>false</organismsDiffer>
    <experiments>3</experiments>
</comment>
<comment type="interaction">
    <interactant intactId="EBI-17684533">
        <id>Q9NRX6</id>
    </interactant>
    <interactant intactId="EBI-1549822">
        <id>Q6P1Q0</id>
        <label>LETMD1</label>
    </interactant>
    <organismsDiffer>false</organismsDiffer>
    <experiments>3</experiments>
</comment>
<comment type="interaction">
    <interactant intactId="EBI-17684533">
        <id>Q9NRX6</id>
    </interactant>
    <interactant intactId="EBI-3930711">
        <id>P48449</id>
        <label>LSS</label>
    </interactant>
    <organismsDiffer>false</organismsDiffer>
    <experiments>3</experiments>
</comment>
<comment type="interaction">
    <interactant intactId="EBI-17684533">
        <id>Q9NRX6</id>
    </interactant>
    <interactant intactId="EBI-373355">
        <id>Q5SR56</id>
        <label>MFSD14B</label>
    </interactant>
    <organismsDiffer>false</organismsDiffer>
    <experiments>3</experiments>
</comment>
<comment type="interaction">
    <interactant intactId="EBI-17684533">
        <id>Q9NRX6</id>
    </interactant>
    <interactant intactId="EBI-11324706">
        <id>Q99735</id>
        <label>MGST2</label>
    </interactant>
    <organismsDiffer>false</organismsDiffer>
    <experiments>3</experiments>
</comment>
<comment type="interaction">
    <interactant intactId="EBI-17684533">
        <id>Q9NRX6</id>
    </interactant>
    <interactant intactId="EBI-12051377">
        <id>Q8N912</id>
        <label>NRAC</label>
    </interactant>
    <organismsDiffer>false</organismsDiffer>
    <experiments>3</experiments>
</comment>
<comment type="interaction">
    <interactant intactId="EBI-17684533">
        <id>Q9NRX6</id>
    </interactant>
    <interactant intactId="EBI-3919291">
        <id>Q9Y342</id>
        <label>PLLP</label>
    </interactant>
    <organismsDiffer>false</organismsDiffer>
    <experiments>3</experiments>
</comment>
<comment type="interaction">
    <interactant intactId="EBI-17684533">
        <id>Q9NRX6</id>
    </interactant>
    <interactant intactId="EBI-7545592">
        <id>Q9H6H4</id>
        <label>REEP4</label>
    </interactant>
    <organismsDiffer>false</organismsDiffer>
    <experiments>3</experiments>
</comment>
<comment type="interaction">
    <interactant intactId="EBI-17684533">
        <id>Q9NRX6</id>
    </interactant>
    <interactant intactId="EBI-3917235">
        <id>Q9NTJ5</id>
        <label>SACM1L</label>
    </interactant>
    <organismsDiffer>false</organismsDiffer>
    <experiments>3</experiments>
</comment>
<comment type="interaction">
    <interactant intactId="EBI-17684533">
        <id>Q9NRX6</id>
    </interactant>
    <interactant intactId="EBI-1058865">
        <id>O75396</id>
        <label>SEC22B</label>
    </interactant>
    <organismsDiffer>false</organismsDiffer>
    <experiments>3</experiments>
</comment>
<comment type="interaction">
    <interactant intactId="EBI-17684533">
        <id>Q9NRX6</id>
    </interactant>
    <interactant intactId="EBI-17769653">
        <id>Q8N130</id>
        <label>SLC34A3</label>
    </interactant>
    <organismsDiffer>false</organismsDiffer>
    <experiments>3</experiments>
</comment>
<comment type="interaction">
    <interactant intactId="EBI-17684533">
        <id>Q9NRX6</id>
    </interactant>
    <interactant intactId="EBI-12828299">
        <id>O60906</id>
        <label>SMPD2</label>
    </interactant>
    <organismsDiffer>false</organismsDiffer>
    <experiments>3</experiments>
</comment>
<comment type="interaction">
    <interactant intactId="EBI-17684533">
        <id>Q9NRX6</id>
    </interactant>
    <interactant intactId="EBI-2691717">
        <id>Q86Y82</id>
        <label>STX12</label>
    </interactant>
    <organismsDiffer>false</organismsDiffer>
    <experiments>3</experiments>
</comment>
<comment type="interaction">
    <interactant intactId="EBI-17684533">
        <id>Q9NRX6</id>
    </interactant>
    <interactant intactId="EBI-9071709">
        <id>P61266</id>
        <label>STX1B</label>
    </interactant>
    <organismsDiffer>false</organismsDiffer>
    <experiments>3</experiments>
</comment>
<comment type="interaction">
    <interactant intactId="EBI-17684533">
        <id>Q9NRX6</id>
    </interactant>
    <interactant intactId="EBI-12847034">
        <id>P59542</id>
        <label>TAS2R19</label>
    </interactant>
    <organismsDiffer>false</organismsDiffer>
    <experiments>3</experiments>
</comment>
<comment type="interaction">
    <interactant intactId="EBI-17684533">
        <id>Q9NRX6</id>
    </interactant>
    <interactant intactId="EBI-6448756">
        <id>Q96DZ7</id>
        <label>TM4SF19</label>
    </interactant>
    <organismsDiffer>false</organismsDiffer>
    <experiments>3</experiments>
</comment>
<comment type="interaction">
    <interactant intactId="EBI-17684533">
        <id>Q9NRX6</id>
    </interactant>
    <interactant intactId="EBI-8644968">
        <id>Q9NV29</id>
        <label>TMEM100</label>
    </interactant>
    <organismsDiffer>false</organismsDiffer>
    <experiments>3</experiments>
</comment>
<comment type="interaction">
    <interactant intactId="EBI-17684533">
        <id>Q9NRX6</id>
    </interactant>
    <interactant intactId="EBI-12845616">
        <id>Q6UX40</id>
        <label>TMEM107</label>
    </interactant>
    <organismsDiffer>false</organismsDiffer>
    <experiments>3</experiments>
</comment>
<comment type="interaction">
    <interactant intactId="EBI-17684533">
        <id>Q9NRX6</id>
    </interactant>
    <interactant intactId="EBI-7601760">
        <id>Q53HI1</id>
        <label>UNC50</label>
    </interactant>
    <organismsDiffer>false</organismsDiffer>
    <experiments>3</experiments>
</comment>
<comment type="interaction">
    <interactant intactId="EBI-17684533">
        <id>Q9NRX6</id>
    </interactant>
    <interactant intactId="EBI-2849773">
        <id>Q8IVQ6</id>
        <label>ZDHHC21</label>
    </interactant>
    <organismsDiffer>false</organismsDiffer>
    <experiments>3</experiments>
</comment>
<comment type="subcellular location">
    <subcellularLocation>
        <location evidence="2">Golgi apparatus membrane</location>
        <topology evidence="2">Single-pass type I membrane protein</topology>
    </subcellularLocation>
</comment>
<comment type="similarity">
    <text evidence="3">Belongs to the KISH family.</text>
</comment>
<dbReference type="EMBL" id="AF164793">
    <property type="protein sequence ID" value="AAF80757.1"/>
    <property type="molecule type" value="mRNA"/>
</dbReference>
<dbReference type="EMBL" id="AK291293">
    <property type="protein sequence ID" value="BAF83982.1"/>
    <property type="molecule type" value="mRNA"/>
</dbReference>
<dbReference type="EMBL" id="AL356488">
    <property type="status" value="NOT_ANNOTATED_CDS"/>
    <property type="molecule type" value="Genomic_DNA"/>
</dbReference>
<dbReference type="EMBL" id="CH471122">
    <property type="protein sequence ID" value="EAW56356.1"/>
    <property type="molecule type" value="Genomic_DNA"/>
</dbReference>
<dbReference type="EMBL" id="BC008739">
    <property type="protein sequence ID" value="AAH08739.1"/>
    <property type="molecule type" value="mRNA"/>
</dbReference>
<dbReference type="EMBL" id="BC065186">
    <property type="protein sequence ID" value="AAH65186.1"/>
    <property type="molecule type" value="mRNA"/>
</dbReference>
<dbReference type="EMBL" id="BC066918">
    <property type="protein sequence ID" value="AAH66918.1"/>
    <property type="molecule type" value="mRNA"/>
</dbReference>
<dbReference type="EMBL" id="BC067116">
    <property type="protein sequence ID" value="AAH67116.1"/>
    <property type="molecule type" value="mRNA"/>
</dbReference>
<dbReference type="EMBL" id="BC146873">
    <property type="protein sequence ID" value="AAI46874.1"/>
    <property type="molecule type" value="mRNA"/>
</dbReference>
<dbReference type="EMBL" id="BC146879">
    <property type="protein sequence ID" value="AAI46880.1"/>
    <property type="molecule type" value="mRNA"/>
</dbReference>
<dbReference type="EMBL" id="BC171849">
    <property type="protein sequence ID" value="AAI71849.1"/>
    <property type="molecule type" value="mRNA"/>
</dbReference>
<dbReference type="CCDS" id="CCDS30789.1"/>
<dbReference type="RefSeq" id="NP_001309177.1">
    <property type="nucleotide sequence ID" value="NM_001322248.1"/>
</dbReference>
<dbReference type="RefSeq" id="NP_064526.1">
    <property type="nucleotide sequence ID" value="NM_020141.4"/>
</dbReference>
<dbReference type="BioGRID" id="121230">
    <property type="interactions" value="41"/>
</dbReference>
<dbReference type="FunCoup" id="Q9NRX6">
    <property type="interactions" value="1326"/>
</dbReference>
<dbReference type="IntAct" id="Q9NRX6">
    <property type="interactions" value="36"/>
</dbReference>
<dbReference type="STRING" id="9606.ENSP00000342148"/>
<dbReference type="iPTMnet" id="Q9NRX6"/>
<dbReference type="PhosphoSitePlus" id="Q9NRX6"/>
<dbReference type="BioMuta" id="TMEM167B"/>
<dbReference type="DMDM" id="74752932"/>
<dbReference type="jPOST" id="Q9NRX6"/>
<dbReference type="MassIVE" id="Q9NRX6"/>
<dbReference type="PaxDb" id="9606-ENSP00000342148"/>
<dbReference type="PeptideAtlas" id="Q9NRX6"/>
<dbReference type="ProteomicsDB" id="82438"/>
<dbReference type="Pumba" id="Q9NRX6"/>
<dbReference type="Antibodypedia" id="82450">
    <property type="antibodies" value="1 antibodies from 1 providers"/>
</dbReference>
<dbReference type="DNASU" id="56900"/>
<dbReference type="Ensembl" id="ENST00000338272.9">
    <property type="protein sequence ID" value="ENSP00000342148.7"/>
    <property type="gene ID" value="ENSG00000215717.7"/>
</dbReference>
<dbReference type="GeneID" id="56900"/>
<dbReference type="KEGG" id="hsa:56900"/>
<dbReference type="MANE-Select" id="ENST00000338272.9">
    <property type="protein sequence ID" value="ENSP00000342148.7"/>
    <property type="RefSeq nucleotide sequence ID" value="NM_020141.4"/>
    <property type="RefSeq protein sequence ID" value="NP_064526.1"/>
</dbReference>
<dbReference type="UCSC" id="uc001dwn.4">
    <property type="organism name" value="human"/>
</dbReference>
<dbReference type="AGR" id="HGNC:30187"/>
<dbReference type="CTD" id="56900"/>
<dbReference type="DisGeNET" id="56900"/>
<dbReference type="GeneCards" id="TMEM167B"/>
<dbReference type="HGNC" id="HGNC:30187">
    <property type="gene designation" value="TMEM167B"/>
</dbReference>
<dbReference type="HPA" id="ENSG00000215717">
    <property type="expression patterns" value="Low tissue specificity"/>
</dbReference>
<dbReference type="neXtProt" id="NX_Q9NRX6"/>
<dbReference type="OpenTargets" id="ENSG00000215717"/>
<dbReference type="PharmGKB" id="PA162405910"/>
<dbReference type="VEuPathDB" id="HostDB:ENSG00000215717"/>
<dbReference type="eggNOG" id="KOG3808">
    <property type="taxonomic scope" value="Eukaryota"/>
</dbReference>
<dbReference type="GeneTree" id="ENSGT00940000162196"/>
<dbReference type="HOGENOM" id="CLU_152663_1_2_1"/>
<dbReference type="InParanoid" id="Q9NRX6"/>
<dbReference type="OMA" id="IVMAFYI"/>
<dbReference type="OrthoDB" id="10034655at2759"/>
<dbReference type="PAN-GO" id="Q9NRX6">
    <property type="GO annotations" value="0 GO annotations based on evolutionary models"/>
</dbReference>
<dbReference type="PhylomeDB" id="Q9NRX6"/>
<dbReference type="TreeFam" id="TF300138"/>
<dbReference type="PathwayCommons" id="Q9NRX6"/>
<dbReference type="SignaLink" id="Q9NRX6"/>
<dbReference type="BioGRID-ORCS" id="56900">
    <property type="hits" value="13 hits in 1158 CRISPR screens"/>
</dbReference>
<dbReference type="ChiTaRS" id="TMEM167B">
    <property type="organism name" value="human"/>
</dbReference>
<dbReference type="GenomeRNAi" id="56900"/>
<dbReference type="Pharos" id="Q9NRX6">
    <property type="development level" value="Tdark"/>
</dbReference>
<dbReference type="PRO" id="PR:Q9NRX6"/>
<dbReference type="Proteomes" id="UP000005640">
    <property type="component" value="Chromosome 1"/>
</dbReference>
<dbReference type="RNAct" id="Q9NRX6">
    <property type="molecule type" value="protein"/>
</dbReference>
<dbReference type="Bgee" id="ENSG00000215717">
    <property type="expression patterns" value="Expressed in upper arm skin and 196 other cell types or tissues"/>
</dbReference>
<dbReference type="ExpressionAtlas" id="Q9NRX6">
    <property type="expression patterns" value="baseline and differential"/>
</dbReference>
<dbReference type="GO" id="GO:0005794">
    <property type="term" value="C:Golgi apparatus"/>
    <property type="evidence" value="ECO:0000314"/>
    <property type="project" value="UniProtKB"/>
</dbReference>
<dbReference type="GO" id="GO:0000139">
    <property type="term" value="C:Golgi membrane"/>
    <property type="evidence" value="ECO:0007669"/>
    <property type="project" value="UniProtKB-SubCell"/>
</dbReference>
<dbReference type="GO" id="GO:0045054">
    <property type="term" value="P:constitutive secretory pathway"/>
    <property type="evidence" value="ECO:0000316"/>
    <property type="project" value="UniProtKB"/>
</dbReference>
<dbReference type="InterPro" id="IPR042863">
    <property type="entry name" value="Kish-B"/>
</dbReference>
<dbReference type="InterPro" id="IPR009653">
    <property type="entry name" value="Ksh1"/>
</dbReference>
<dbReference type="PANTHER" id="PTHR46815">
    <property type="entry name" value="PROTEIN KISH-B"/>
    <property type="match status" value="1"/>
</dbReference>
<dbReference type="PANTHER" id="PTHR46815:SF1">
    <property type="entry name" value="PROTEIN KISH-B"/>
    <property type="match status" value="1"/>
</dbReference>
<dbReference type="Pfam" id="PF06842">
    <property type="entry name" value="DUF1242"/>
    <property type="match status" value="1"/>
</dbReference>
<evidence type="ECO:0000255" key="1"/>
<evidence type="ECO:0000269" key="2">
    <source>
    </source>
</evidence>
<evidence type="ECO:0000305" key="3"/>